<accession>Q05117</accession>
<organism>
    <name type="scientific">Mus musculus</name>
    <name type="common">Mouse</name>
    <dbReference type="NCBI Taxonomy" id="10090"/>
    <lineage>
        <taxon>Eukaryota</taxon>
        <taxon>Metazoa</taxon>
        <taxon>Chordata</taxon>
        <taxon>Craniata</taxon>
        <taxon>Vertebrata</taxon>
        <taxon>Euteleostomi</taxon>
        <taxon>Mammalia</taxon>
        <taxon>Eutheria</taxon>
        <taxon>Euarchontoglires</taxon>
        <taxon>Glires</taxon>
        <taxon>Rodentia</taxon>
        <taxon>Myomorpha</taxon>
        <taxon>Muroidea</taxon>
        <taxon>Muridae</taxon>
        <taxon>Murinae</taxon>
        <taxon>Mus</taxon>
        <taxon>Mus</taxon>
    </lineage>
</organism>
<keyword id="KW-1015">Disulfide bond</keyword>
<keyword id="KW-0325">Glycoprotein</keyword>
<keyword id="KW-0378">Hydrolase</keyword>
<keyword id="KW-0408">Iron</keyword>
<keyword id="KW-0458">Lysosome</keyword>
<keyword id="KW-0479">Metal-binding</keyword>
<keyword id="KW-1185">Reference proteome</keyword>
<keyword id="KW-0732">Signal</keyword>
<reference key="1">
    <citation type="journal article" date="1993" name="Gene">
        <title>Isolation and characterization of the genes encoding mouse and human type-5 acid phosphatase.</title>
        <authorList>
            <person name="Cassady A.I."/>
            <person name="King A.G."/>
            <person name="Cross N.C.P."/>
            <person name="Hume D.A."/>
        </authorList>
    </citation>
    <scope>NUCLEOTIDE SEQUENCE [GENOMIC DNA]</scope>
</reference>
<reference key="2">
    <citation type="journal article" date="2004" name="Genome Res.">
        <title>The status, quality, and expansion of the NIH full-length cDNA project: the Mammalian Gene Collection (MGC).</title>
        <authorList>
            <consortium name="The MGC Project Team"/>
        </authorList>
    </citation>
    <scope>NUCLEOTIDE SEQUENCE [LARGE SCALE MRNA]</scope>
    <source>
        <strain>Czech II</strain>
        <tissue>Mammary gland</tissue>
    </source>
</reference>
<reference key="3">
    <citation type="journal article" date="1993" name="J. Bone Miner. Res.">
        <title>Cloning and characterization of the 5'-flanking region of the mouse tartrate-resistant acid phosphatase gene.</title>
        <authorList>
            <person name="Reddy S.V."/>
            <person name="Scarcez T."/>
            <person name="Windle J.J."/>
            <person name="Leach R.J."/>
            <person name="Hundley J.E."/>
            <person name="Chirgwin J.M."/>
            <person name="Chou J.Y."/>
            <person name="Roodman G.D."/>
        </authorList>
    </citation>
    <scope>NUCLEOTIDE SEQUENCE [GENOMIC DNA] OF 1-48</scope>
    <source>
        <tissue>Spleen</tissue>
    </source>
</reference>
<reference key="4">
    <citation type="journal article" date="2010" name="Cell">
        <title>A tissue-specific atlas of mouse protein phosphorylation and expression.</title>
        <authorList>
            <person name="Huttlin E.L."/>
            <person name="Jedrychowski M.P."/>
            <person name="Elias J.E."/>
            <person name="Goswami T."/>
            <person name="Rad R."/>
            <person name="Beausoleil S.A."/>
            <person name="Villen J."/>
            <person name="Haas W."/>
            <person name="Sowa M.E."/>
            <person name="Gygi S.P."/>
        </authorList>
    </citation>
    <scope>IDENTIFICATION BY MASS SPECTROMETRY [LARGE SCALE ANALYSIS]</scope>
    <source>
        <tissue>Kidney</tissue>
        <tissue>Liver</tissue>
        <tissue>Spleen</tissue>
    </source>
</reference>
<reference key="5">
    <citation type="journal article" date="2013" name="Cell Res.">
        <title>Early estrogen-induced gene 1, a novel RANK signaling component, is essential for osteoclastogenesis.</title>
        <authorList>
            <person name="Choi H.K."/>
            <person name="Kang H.R."/>
            <person name="Jung E."/>
            <person name="Kim T.E."/>
            <person name="Lin J.J."/>
            <person name="Lee S.Y."/>
        </authorList>
    </citation>
    <scope>INDUCTION BY TNFSF11</scope>
</reference>
<proteinExistence type="evidence at protein level"/>
<comment type="function">
    <text>May play a role in the process of bone resorption. The osteoclastic trap acts on nucleotide tri- and diphosphates with higher affinity, compared with other substrates.</text>
</comment>
<comment type="catalytic activity">
    <reaction>
        <text>a phosphate monoester + H2O = an alcohol + phosphate</text>
        <dbReference type="Rhea" id="RHEA:15017"/>
        <dbReference type="ChEBI" id="CHEBI:15377"/>
        <dbReference type="ChEBI" id="CHEBI:30879"/>
        <dbReference type="ChEBI" id="CHEBI:43474"/>
        <dbReference type="ChEBI" id="CHEBI:67140"/>
        <dbReference type="EC" id="3.1.3.2"/>
    </reaction>
</comment>
<comment type="cofactor">
    <cofactor>
        <name>Fe cation</name>
        <dbReference type="ChEBI" id="CHEBI:24875"/>
    </cofactor>
    <text>Binds 2 iron ions per subunit.</text>
</comment>
<comment type="subunit">
    <text>Exists either as monomer or, after proteolytic processing, as a dimer of two chains linked by disulfide bond(s).</text>
</comment>
<comment type="subcellular location">
    <subcellularLocation>
        <location>Lysosome</location>
    </subcellularLocation>
</comment>
<comment type="tissue specificity">
    <text>Characteristic constituent of osteoclasts.</text>
</comment>
<comment type="induction">
    <text evidence="3">Induced by TNFSF11/RANKL-stimulation of bone marrow-derived macrophages.</text>
</comment>
<feature type="signal peptide" evidence="1">
    <location>
        <begin position="1"/>
        <end position="22"/>
    </location>
</feature>
<feature type="chain" id="PRO_0000023982" description="Tartrate-resistant acid phosphatase type 5">
    <location>
        <begin position="23"/>
        <end position="327"/>
    </location>
</feature>
<feature type="binding site" evidence="1">
    <location>
        <position position="35"/>
    </location>
    <ligand>
        <name>Fe cation</name>
        <dbReference type="ChEBI" id="CHEBI:24875"/>
        <label>1</label>
    </ligand>
</feature>
<feature type="binding site" evidence="1">
    <location>
        <position position="73"/>
    </location>
    <ligand>
        <name>Fe cation</name>
        <dbReference type="ChEBI" id="CHEBI:24875"/>
        <label>1</label>
    </ligand>
</feature>
<feature type="binding site" evidence="1">
    <location>
        <position position="73"/>
    </location>
    <ligand>
        <name>Fe cation</name>
        <dbReference type="ChEBI" id="CHEBI:24875"/>
        <label>2</label>
    </ligand>
</feature>
<feature type="binding site" evidence="1">
    <location>
        <position position="76"/>
    </location>
    <ligand>
        <name>Fe cation</name>
        <dbReference type="ChEBI" id="CHEBI:24875"/>
        <label>1</label>
    </ligand>
</feature>
<feature type="binding site" evidence="1">
    <location>
        <position position="112"/>
    </location>
    <ligand>
        <name>Fe cation</name>
        <dbReference type="ChEBI" id="CHEBI:24875"/>
        <label>2</label>
    </ligand>
</feature>
<feature type="binding site" evidence="1">
    <location>
        <position position="207"/>
    </location>
    <ligand>
        <name>Fe cation</name>
        <dbReference type="ChEBI" id="CHEBI:24875"/>
        <label>2</label>
    </ligand>
</feature>
<feature type="binding site" evidence="1">
    <location>
        <position position="242"/>
    </location>
    <ligand>
        <name>Fe cation</name>
        <dbReference type="ChEBI" id="CHEBI:24875"/>
        <label>2</label>
    </ligand>
</feature>
<feature type="binding site" evidence="1">
    <location>
        <position position="244"/>
    </location>
    <ligand>
        <name>Fe cation</name>
        <dbReference type="ChEBI" id="CHEBI:24875"/>
        <label>1</label>
    </ligand>
</feature>
<feature type="glycosylation site" description="N-linked (GlcNAc...) asparagine" evidence="2">
    <location>
        <position position="118"/>
    </location>
</feature>
<feature type="glycosylation site" description="N-linked (GlcNAc...) asparagine" evidence="2">
    <location>
        <position position="149"/>
    </location>
</feature>
<feature type="disulfide bond" evidence="1">
    <location>
        <begin position="163"/>
        <end position="221"/>
    </location>
</feature>
<evidence type="ECO:0000250" key="1"/>
<evidence type="ECO:0000255" key="2"/>
<evidence type="ECO:0000269" key="3">
    <source>
    </source>
</evidence>
<name>PPA5_MOUSE</name>
<gene>
    <name type="primary">Acp5</name>
    <name type="synonym">T5ap</name>
    <name type="synonym">Trap</name>
</gene>
<sequence length="327" mass="36807">MDSWVVLLGLQIIWLPLLTHGTAPTPTLRFVAVGDWGGVPNAPFHTAREMANAKEIARTVQTMGADFIMSLGDNFYFTGVHDASDKRFQETFEDVFSDRALRNIPWYVLAGNHDHLGNVSAQIAYSKISKRWNFPSPYYRLRFKIPRTNITVAIFMLDTVMLCGNSDDFASQQPKMPRDLGVARTQLSWLKKQLAAAKEDYVLVAGHYPIWSIAEHGPTRCLVKNLRPLLATYGVTAYLCGHDHNLQYLQDENGVGYVLSGAGNFMDPSVRHQRKVPNGYLRFHYGSEDSLGGFTHVEISPKEMTIIYVEASGKSLFKTSLPRRPRP</sequence>
<protein>
    <recommendedName>
        <fullName>Tartrate-resistant acid phosphatase type 5</fullName>
        <shortName>TR-AP</shortName>
        <ecNumber>3.1.3.2</ecNumber>
    </recommendedName>
    <alternativeName>
        <fullName>Tartrate-resistant acid ATPase</fullName>
        <shortName>TrATPase</shortName>
    </alternativeName>
    <alternativeName>
        <fullName>Type 5 acid phosphatase</fullName>
    </alternativeName>
</protein>
<dbReference type="EC" id="3.1.3.2"/>
<dbReference type="EMBL" id="M99054">
    <property type="protein sequence ID" value="AAA37245.1"/>
    <property type="molecule type" value="Genomic_DNA"/>
</dbReference>
<dbReference type="EMBL" id="BC012911">
    <property type="protein sequence ID" value="AAH12911.1"/>
    <property type="molecule type" value="mRNA"/>
</dbReference>
<dbReference type="EMBL" id="BC019160">
    <property type="protein sequence ID" value="AAH19160.1"/>
    <property type="molecule type" value="mRNA"/>
</dbReference>
<dbReference type="EMBL" id="BC029644">
    <property type="protein sequence ID" value="AAH29644.1"/>
    <property type="molecule type" value="mRNA"/>
</dbReference>
<dbReference type="EMBL" id="M85212">
    <property type="protein sequence ID" value="AAA40479.1"/>
    <property type="molecule type" value="Genomic_DNA"/>
</dbReference>
<dbReference type="CCDS" id="CCDS22923.1"/>
<dbReference type="PIR" id="JN0787">
    <property type="entry name" value="JN0787"/>
</dbReference>
<dbReference type="RefSeq" id="NP_001095874.1">
    <property type="nucleotide sequence ID" value="NM_001102404.1"/>
</dbReference>
<dbReference type="RefSeq" id="NP_001095875.1">
    <property type="nucleotide sequence ID" value="NM_001102405.1"/>
</dbReference>
<dbReference type="RefSeq" id="NP_031414.1">
    <property type="nucleotide sequence ID" value="NM_007388.3"/>
</dbReference>
<dbReference type="RefSeq" id="XP_006510007.1">
    <property type="nucleotide sequence ID" value="XM_006509944.3"/>
</dbReference>
<dbReference type="RefSeq" id="XP_006510008.1">
    <property type="nucleotide sequence ID" value="XM_006509945.3"/>
</dbReference>
<dbReference type="RefSeq" id="XP_006510009.1">
    <property type="nucleotide sequence ID" value="XM_006509946.3"/>
</dbReference>
<dbReference type="RefSeq" id="XP_011240686.1">
    <property type="nucleotide sequence ID" value="XM_011242384.2"/>
</dbReference>
<dbReference type="SMR" id="Q05117"/>
<dbReference type="FunCoup" id="Q05117">
    <property type="interactions" value="181"/>
</dbReference>
<dbReference type="IntAct" id="Q05117">
    <property type="interactions" value="1"/>
</dbReference>
<dbReference type="STRING" id="10090.ENSMUSP00000150903"/>
<dbReference type="ChEMBL" id="CHEMBL3120042"/>
<dbReference type="GlyCosmos" id="Q05117">
    <property type="glycosylation" value="2 sites, No reported glycans"/>
</dbReference>
<dbReference type="GlyGen" id="Q05117">
    <property type="glycosylation" value="4 sites, 1 O-linked glycan (1 site)"/>
</dbReference>
<dbReference type="iPTMnet" id="Q05117"/>
<dbReference type="PhosphoSitePlus" id="Q05117"/>
<dbReference type="SwissPalm" id="Q05117"/>
<dbReference type="jPOST" id="Q05117"/>
<dbReference type="PaxDb" id="10090-ENSMUSP00000127128"/>
<dbReference type="PeptideAtlas" id="Q05117"/>
<dbReference type="ProteomicsDB" id="289727"/>
<dbReference type="Antibodypedia" id="25921">
    <property type="antibodies" value="594 antibodies from 35 providers"/>
</dbReference>
<dbReference type="DNASU" id="11433"/>
<dbReference type="Ensembl" id="ENSMUST00000069330.14">
    <property type="protein sequence ID" value="ENSMUSP00000065425.7"/>
    <property type="gene ID" value="ENSMUSG00000001348.16"/>
</dbReference>
<dbReference type="Ensembl" id="ENSMUST00000115315.3">
    <property type="protein sequence ID" value="ENSMUSP00000110970.3"/>
    <property type="gene ID" value="ENSMUSG00000001348.16"/>
</dbReference>
<dbReference type="Ensembl" id="ENSMUST00000165735.9">
    <property type="protein sequence ID" value="ENSMUSP00000127128.2"/>
    <property type="gene ID" value="ENSMUSG00000001348.16"/>
</dbReference>
<dbReference type="Ensembl" id="ENSMUST00000213815.2">
    <property type="protein sequence ID" value="ENSMUSP00000149597.2"/>
    <property type="gene ID" value="ENSMUSG00000001348.16"/>
</dbReference>
<dbReference type="Ensembl" id="ENSMUST00000217643.2">
    <property type="protein sequence ID" value="ENSMUSP00000150903.2"/>
    <property type="gene ID" value="ENSMUSG00000001348.16"/>
</dbReference>
<dbReference type="GeneID" id="11433"/>
<dbReference type="KEGG" id="mmu:11433"/>
<dbReference type="UCSC" id="uc009onz.1">
    <property type="organism name" value="mouse"/>
</dbReference>
<dbReference type="AGR" id="MGI:87883"/>
<dbReference type="CTD" id="54"/>
<dbReference type="MGI" id="MGI:87883">
    <property type="gene designation" value="Acp5"/>
</dbReference>
<dbReference type="VEuPathDB" id="HostDB:ENSMUSG00000001348"/>
<dbReference type="eggNOG" id="KOG2679">
    <property type="taxonomic scope" value="Eukaryota"/>
</dbReference>
<dbReference type="GeneTree" id="ENSGT00390000016735"/>
<dbReference type="HOGENOM" id="CLU_043332_1_0_1"/>
<dbReference type="InParanoid" id="Q05117"/>
<dbReference type="OMA" id="GFCIHEL"/>
<dbReference type="OrthoDB" id="411211at2759"/>
<dbReference type="PhylomeDB" id="Q05117"/>
<dbReference type="TreeFam" id="TF313175"/>
<dbReference type="BRENDA" id="3.1.3.2">
    <property type="organism ID" value="3474"/>
</dbReference>
<dbReference type="Reactome" id="R-MMU-196843">
    <property type="pathway name" value="Vitamin B2 (riboflavin) metabolism"/>
</dbReference>
<dbReference type="BioGRID-ORCS" id="11433">
    <property type="hits" value="2 hits in 79 CRISPR screens"/>
</dbReference>
<dbReference type="ChiTaRS" id="Ssr4">
    <property type="organism name" value="mouse"/>
</dbReference>
<dbReference type="PRO" id="PR:Q05117"/>
<dbReference type="Proteomes" id="UP000000589">
    <property type="component" value="Chromosome 9"/>
</dbReference>
<dbReference type="RNAct" id="Q05117">
    <property type="molecule type" value="protein"/>
</dbReference>
<dbReference type="Bgee" id="ENSMUSG00000001348">
    <property type="expression patterns" value="Expressed in diaphysis of femur and 195 other cell types or tissues"/>
</dbReference>
<dbReference type="GO" id="GO:0005764">
    <property type="term" value="C:lysosome"/>
    <property type="evidence" value="ECO:0000314"/>
    <property type="project" value="MGI"/>
</dbReference>
<dbReference type="GO" id="GO:0003993">
    <property type="term" value="F:acid phosphatase activity"/>
    <property type="evidence" value="ECO:0000314"/>
    <property type="project" value="MGI"/>
</dbReference>
<dbReference type="GO" id="GO:0008199">
    <property type="term" value="F:ferric iron binding"/>
    <property type="evidence" value="ECO:0000250"/>
    <property type="project" value="UniProtKB"/>
</dbReference>
<dbReference type="GO" id="GO:0008198">
    <property type="term" value="F:ferrous iron binding"/>
    <property type="evidence" value="ECO:0000250"/>
    <property type="project" value="UniProtKB"/>
</dbReference>
<dbReference type="GO" id="GO:0060349">
    <property type="term" value="P:bone morphogenesis"/>
    <property type="evidence" value="ECO:0000315"/>
    <property type="project" value="MGI"/>
</dbReference>
<dbReference type="GO" id="GO:0045453">
    <property type="term" value="P:bone resorption"/>
    <property type="evidence" value="ECO:0000315"/>
    <property type="project" value="MGI"/>
</dbReference>
<dbReference type="GO" id="GO:0050830">
    <property type="term" value="P:defense response to Gram-positive bacterium"/>
    <property type="evidence" value="ECO:0000315"/>
    <property type="project" value="MGI"/>
</dbReference>
<dbReference type="GO" id="GO:0050728">
    <property type="term" value="P:negative regulation of inflammatory response"/>
    <property type="evidence" value="ECO:0000315"/>
    <property type="project" value="MGI"/>
</dbReference>
<dbReference type="GO" id="GO:0032691">
    <property type="term" value="P:negative regulation of interleukin-1 beta production"/>
    <property type="evidence" value="ECO:0000315"/>
    <property type="project" value="MGI"/>
</dbReference>
<dbReference type="GO" id="GO:0032695">
    <property type="term" value="P:negative regulation of interleukin-12 production"/>
    <property type="evidence" value="ECO:0000315"/>
    <property type="project" value="MGI"/>
</dbReference>
<dbReference type="GO" id="GO:0010936">
    <property type="term" value="P:negative regulation of macrophage cytokine production"/>
    <property type="evidence" value="ECO:0000315"/>
    <property type="project" value="MGI"/>
</dbReference>
<dbReference type="GO" id="GO:0045019">
    <property type="term" value="P:negative regulation of nitric oxide biosynthetic process"/>
    <property type="evidence" value="ECO:0000315"/>
    <property type="project" value="MGI"/>
</dbReference>
<dbReference type="GO" id="GO:0032929">
    <property type="term" value="P:negative regulation of superoxide anion generation"/>
    <property type="evidence" value="ECO:0000315"/>
    <property type="project" value="MGI"/>
</dbReference>
<dbReference type="GO" id="GO:0032720">
    <property type="term" value="P:negative regulation of tumor necrosis factor production"/>
    <property type="evidence" value="ECO:0000315"/>
    <property type="project" value="MGI"/>
</dbReference>
<dbReference type="GO" id="GO:0006809">
    <property type="term" value="P:nitric oxide biosynthetic process"/>
    <property type="evidence" value="ECO:0000315"/>
    <property type="project" value="MGI"/>
</dbReference>
<dbReference type="GO" id="GO:0034097">
    <property type="term" value="P:response to cytokine"/>
    <property type="evidence" value="ECO:0000314"/>
    <property type="project" value="MGI"/>
</dbReference>
<dbReference type="GO" id="GO:0032496">
    <property type="term" value="P:response to lipopolysaccharide"/>
    <property type="evidence" value="ECO:0000315"/>
    <property type="project" value="MGI"/>
</dbReference>
<dbReference type="GO" id="GO:0042554">
    <property type="term" value="P:superoxide anion generation"/>
    <property type="evidence" value="ECO:0000315"/>
    <property type="project" value="MGI"/>
</dbReference>
<dbReference type="CDD" id="cd07378">
    <property type="entry name" value="MPP_ACP5"/>
    <property type="match status" value="1"/>
</dbReference>
<dbReference type="FunFam" id="3.60.21.10:FF:000033">
    <property type="entry name" value="Tartrate-resistant acid phosphatase type 5"/>
    <property type="match status" value="1"/>
</dbReference>
<dbReference type="Gene3D" id="3.60.21.10">
    <property type="match status" value="1"/>
</dbReference>
<dbReference type="InterPro" id="IPR024927">
    <property type="entry name" value="Acid_PPase"/>
</dbReference>
<dbReference type="InterPro" id="IPR004843">
    <property type="entry name" value="Calcineurin-like_PHP_ApaH"/>
</dbReference>
<dbReference type="InterPro" id="IPR029052">
    <property type="entry name" value="Metallo-depent_PP-like"/>
</dbReference>
<dbReference type="InterPro" id="IPR051558">
    <property type="entry name" value="Metallophosphoesterase_PAP"/>
</dbReference>
<dbReference type="PANTHER" id="PTHR10161">
    <property type="entry name" value="TARTRATE-RESISTANT ACID PHOSPHATASE TYPE 5"/>
    <property type="match status" value="1"/>
</dbReference>
<dbReference type="PANTHER" id="PTHR10161:SF14">
    <property type="entry name" value="TARTRATE-RESISTANT ACID PHOSPHATASE TYPE 5"/>
    <property type="match status" value="1"/>
</dbReference>
<dbReference type="Pfam" id="PF00149">
    <property type="entry name" value="Metallophos"/>
    <property type="match status" value="1"/>
</dbReference>
<dbReference type="PIRSF" id="PIRSF000898">
    <property type="entry name" value="Acid_Ptase_5"/>
    <property type="match status" value="1"/>
</dbReference>
<dbReference type="SUPFAM" id="SSF56300">
    <property type="entry name" value="Metallo-dependent phosphatases"/>
    <property type="match status" value="1"/>
</dbReference>